<keyword id="KW-0119">Carbohydrate metabolism</keyword>
<keyword id="KW-1015">Disulfide bond</keyword>
<keyword id="KW-0325">Glycoprotein</keyword>
<keyword id="KW-0326">Glycosidase</keyword>
<keyword id="KW-0378">Hydrolase</keyword>
<keyword id="KW-0624">Polysaccharide degradation</keyword>
<keyword id="KW-0677">Repeat</keyword>
<keyword id="KW-0964">Secreted</keyword>
<keyword id="KW-0732">Signal</keyword>
<keyword id="KW-0858">Xylan degradation</keyword>
<feature type="signal peptide" evidence="2">
    <location>
        <begin position="1"/>
        <end position="20"/>
    </location>
</feature>
<feature type="chain" id="PRO_0000429666" description="Endo-1,4-beta-xylanase B">
    <location>
        <begin position="21"/>
        <end position="860"/>
    </location>
</feature>
<feature type="domain" description="GH10" evidence="4">
    <location>
        <begin position="21"/>
        <end position="324"/>
    </location>
</feature>
<feature type="repeat" description="1">
    <location>
        <begin position="375"/>
        <end position="382"/>
    </location>
</feature>
<feature type="repeat" description="2">
    <location>
        <begin position="391"/>
        <end position="398"/>
    </location>
</feature>
<feature type="repeat" description="3">
    <location>
        <begin position="415"/>
        <end position="422"/>
    </location>
</feature>
<feature type="repeat" description="4">
    <location>
        <begin position="431"/>
        <end position="438"/>
    </location>
</feature>
<feature type="repeat" description="5">
    <location>
        <begin position="439"/>
        <end position="446"/>
    </location>
</feature>
<feature type="repeat" description="6">
    <location>
        <begin position="447"/>
        <end position="454"/>
    </location>
</feature>
<feature type="repeat" description="7">
    <location>
        <begin position="455"/>
        <end position="462"/>
    </location>
</feature>
<feature type="repeat" description="8">
    <location>
        <begin position="463"/>
        <end position="470"/>
    </location>
</feature>
<feature type="repeat" description="9">
    <location>
        <begin position="471"/>
        <end position="478"/>
    </location>
</feature>
<feature type="repeat" description="10">
    <location>
        <begin position="479"/>
        <end position="486"/>
    </location>
</feature>
<feature type="repeat" description="11">
    <location>
        <begin position="487"/>
        <end position="494"/>
    </location>
</feature>
<feature type="repeat" description="12">
    <location>
        <begin position="495"/>
        <end position="502"/>
    </location>
</feature>
<feature type="repeat" description="13">
    <location>
        <begin position="503"/>
        <end position="510"/>
    </location>
</feature>
<feature type="repeat" description="14">
    <location>
        <begin position="511"/>
        <end position="518"/>
    </location>
</feature>
<feature type="repeat" description="15">
    <location>
        <begin position="519"/>
        <end position="526"/>
    </location>
</feature>
<feature type="repeat" description="16">
    <location>
        <begin position="527"/>
        <end position="534"/>
    </location>
</feature>
<feature type="repeat" description="17">
    <location>
        <begin position="535"/>
        <end position="542"/>
    </location>
</feature>
<feature type="repeat" description="18">
    <location>
        <begin position="543"/>
        <end position="550"/>
    </location>
</feature>
<feature type="repeat" description="19">
    <location>
        <begin position="551"/>
        <end position="558"/>
    </location>
</feature>
<feature type="repeat" description="20">
    <location>
        <begin position="559"/>
        <end position="566"/>
    </location>
</feature>
<feature type="repeat" description="21">
    <location>
        <begin position="567"/>
        <end position="574"/>
    </location>
</feature>
<feature type="repeat" description="22">
    <location>
        <begin position="575"/>
        <end position="582"/>
    </location>
</feature>
<feature type="repeat" description="23">
    <location>
        <begin position="583"/>
        <end position="590"/>
    </location>
</feature>
<feature type="repeat" description="24">
    <location>
        <begin position="591"/>
        <end position="598"/>
    </location>
</feature>
<feature type="repeat" description="25">
    <location>
        <begin position="599"/>
        <end position="606"/>
    </location>
</feature>
<feature type="repeat" description="26">
    <location>
        <begin position="607"/>
        <end position="614"/>
    </location>
</feature>
<feature type="repeat" description="27">
    <location>
        <begin position="615"/>
        <end position="622"/>
    </location>
</feature>
<feature type="repeat" description="28">
    <location>
        <begin position="623"/>
        <end position="630"/>
    </location>
</feature>
<feature type="repeat" description="29">
    <location>
        <begin position="631"/>
        <end position="638"/>
    </location>
</feature>
<feature type="repeat" description="30">
    <location>
        <begin position="639"/>
        <end position="646"/>
    </location>
</feature>
<feature type="repeat" description="31">
    <location>
        <begin position="647"/>
        <end position="654"/>
    </location>
</feature>
<feature type="repeat" description="32">
    <location>
        <begin position="655"/>
        <end position="662"/>
    </location>
</feature>
<feature type="repeat" description="33">
    <location>
        <begin position="663"/>
        <end position="670"/>
    </location>
</feature>
<feature type="repeat" description="34">
    <location>
        <begin position="671"/>
        <end position="678"/>
    </location>
</feature>
<feature type="repeat" description="35">
    <location>
        <begin position="679"/>
        <end position="686"/>
    </location>
</feature>
<feature type="repeat" description="36">
    <location>
        <begin position="687"/>
        <end position="694"/>
    </location>
</feature>
<feature type="repeat" description="37">
    <location>
        <begin position="695"/>
        <end position="702"/>
    </location>
</feature>
<feature type="repeat" description="38">
    <location>
        <begin position="703"/>
        <end position="710"/>
    </location>
</feature>
<feature type="repeat" description="39">
    <location>
        <begin position="711"/>
        <end position="718"/>
    </location>
</feature>
<feature type="repeat" description="40">
    <location>
        <begin position="719"/>
        <end position="726"/>
    </location>
</feature>
<feature type="repeat" description="41">
    <location>
        <begin position="727"/>
        <end position="734"/>
    </location>
</feature>
<feature type="repeat" description="42">
    <location>
        <begin position="735"/>
        <end position="742"/>
    </location>
</feature>
<feature type="repeat" description="43">
    <location>
        <begin position="743"/>
        <end position="750"/>
    </location>
</feature>
<feature type="repeat" description="44">
    <location>
        <begin position="751"/>
        <end position="758"/>
    </location>
</feature>
<feature type="repeat" description="45">
    <location>
        <begin position="759"/>
        <end position="766"/>
    </location>
</feature>
<feature type="repeat" description="46">
    <location>
        <begin position="767"/>
        <end position="774"/>
    </location>
</feature>
<feature type="repeat" description="47">
    <location>
        <begin position="775"/>
        <end position="782"/>
    </location>
</feature>
<feature type="domain" description="CBM1" evidence="3">
    <location>
        <begin position="824"/>
        <end position="860"/>
    </location>
</feature>
<feature type="region of interest" description="Disordered" evidence="6">
    <location>
        <begin position="330"/>
        <end position="793"/>
    </location>
</feature>
<feature type="region of interest" description="47 X 8 AA tandem repeats of [SKN]-S-K-T-L-P-G-G">
    <location>
        <begin position="375"/>
        <end position="782"/>
    </location>
</feature>
<feature type="compositionally biased region" description="Polar residues" evidence="6">
    <location>
        <begin position="330"/>
        <end position="362"/>
    </location>
</feature>
<feature type="compositionally biased region" description="Polar residues" evidence="6">
    <location>
        <begin position="371"/>
        <end position="418"/>
    </location>
</feature>
<feature type="compositionally biased region" description="Polar residues" evidence="6">
    <location>
        <begin position="461"/>
        <end position="474"/>
    </location>
</feature>
<feature type="compositionally biased region" description="Polar residues" evidence="6">
    <location>
        <begin position="485"/>
        <end position="498"/>
    </location>
</feature>
<feature type="compositionally biased region" description="Polar residues" evidence="6">
    <location>
        <begin position="525"/>
        <end position="546"/>
    </location>
</feature>
<feature type="compositionally biased region" description="Polar residues" evidence="6">
    <location>
        <begin position="557"/>
        <end position="570"/>
    </location>
</feature>
<feature type="compositionally biased region" description="Polar residues" evidence="6">
    <location>
        <begin position="581"/>
        <end position="594"/>
    </location>
</feature>
<feature type="compositionally biased region" description="Polar residues" evidence="6">
    <location>
        <begin position="605"/>
        <end position="618"/>
    </location>
</feature>
<feature type="compositionally biased region" description="Polar residues" evidence="6">
    <location>
        <begin position="645"/>
        <end position="666"/>
    </location>
</feature>
<feature type="compositionally biased region" description="Polar residues" evidence="6">
    <location>
        <begin position="741"/>
        <end position="754"/>
    </location>
</feature>
<feature type="active site" description="Proton donor" evidence="1">
    <location>
        <position position="144"/>
    </location>
</feature>
<feature type="active site" description="Nucleophile" evidence="5">
    <location>
        <position position="255"/>
    </location>
</feature>
<feature type="glycosylation site" description="N-linked (GlcNAc...) asparagine" evidence="2">
    <location>
        <position position="295"/>
    </location>
</feature>
<feature type="glycosylation site" description="N-linked (GlcNAc...) asparagine" evidence="2">
    <location>
        <position position="309"/>
    </location>
</feature>
<feature type="glycosylation site" description="N-linked (GlcNAc...) asparagine" evidence="2">
    <location>
        <position position="359"/>
    </location>
</feature>
<feature type="glycosylation site" description="N-linked (GlcNAc...) asparagine" evidence="2">
    <location>
        <position position="374"/>
    </location>
</feature>
<feature type="glycosylation site" description="N-linked (GlcNAc...) asparagine" evidence="2">
    <location>
        <position position="390"/>
    </location>
</feature>
<feature type="glycosylation site" description="N-linked (GlcNAc...) asparagine" evidence="2">
    <location>
        <position position="406"/>
    </location>
</feature>
<feature type="glycosylation site" description="N-linked (GlcNAc...) asparagine" evidence="2">
    <location>
        <position position="845"/>
    </location>
</feature>
<feature type="disulfide bond" evidence="1">
    <location>
        <begin position="278"/>
        <end position="284"/>
    </location>
</feature>
<protein>
    <recommendedName>
        <fullName>Endo-1,4-beta-xylanase B</fullName>
        <shortName>Xylanase B</shortName>
        <ecNumber>3.2.1.8</ecNumber>
    </recommendedName>
    <alternativeName>
        <fullName>1,4-beta-D-xylan xylanohydrolase B</fullName>
    </alternativeName>
</protein>
<organism>
    <name type="scientific">Neocallimastix patriciarum</name>
    <name type="common">Rumen fungus</name>
    <dbReference type="NCBI Taxonomy" id="4758"/>
    <lineage>
        <taxon>Eukaryota</taxon>
        <taxon>Fungi</taxon>
        <taxon>Fungi incertae sedis</taxon>
        <taxon>Chytridiomycota</taxon>
        <taxon>Chytridiomycota incertae sedis</taxon>
        <taxon>Neocallimastigomycetes</taxon>
        <taxon>Neocallimastigales</taxon>
        <taxon>Neocallimastigaceae</taxon>
        <taxon>Neocallimastix</taxon>
    </lineage>
</organism>
<proteinExistence type="evidence at transcript level"/>
<evidence type="ECO:0000250" key="1"/>
<evidence type="ECO:0000255" key="2"/>
<evidence type="ECO:0000255" key="3">
    <source>
        <dbReference type="PROSITE-ProRule" id="PRU00597"/>
    </source>
</evidence>
<evidence type="ECO:0000255" key="4">
    <source>
        <dbReference type="PROSITE-ProRule" id="PRU01096"/>
    </source>
</evidence>
<evidence type="ECO:0000255" key="5">
    <source>
        <dbReference type="PROSITE-ProRule" id="PRU10061"/>
    </source>
</evidence>
<evidence type="ECO:0000256" key="6">
    <source>
        <dbReference type="SAM" id="MobiDB-lite"/>
    </source>
</evidence>
<evidence type="ECO:0000305" key="7"/>
<name>XYNB_NEOPA</name>
<accession>Q02290</accession>
<gene>
    <name type="primary">xynB</name>
</gene>
<dbReference type="EC" id="3.2.1.8"/>
<dbReference type="EMBL" id="S71569">
    <property type="protein sequence ID" value="AAB30669.1"/>
    <property type="molecule type" value="mRNA"/>
</dbReference>
<dbReference type="PIR" id="S43846">
    <property type="entry name" value="S43846"/>
</dbReference>
<dbReference type="SMR" id="Q02290"/>
<dbReference type="CAZy" id="CBM1">
    <property type="family name" value="Carbohydrate-Binding Module Family 1"/>
</dbReference>
<dbReference type="CAZy" id="GH10">
    <property type="family name" value="Glycoside Hydrolase Family 10"/>
</dbReference>
<dbReference type="GlyCosmos" id="Q02290">
    <property type="glycosylation" value="7 sites, No reported glycans"/>
</dbReference>
<dbReference type="UniPathway" id="UPA00114"/>
<dbReference type="GO" id="GO:0005576">
    <property type="term" value="C:extracellular region"/>
    <property type="evidence" value="ECO:0007669"/>
    <property type="project" value="UniProtKB-SubCell"/>
</dbReference>
<dbReference type="GO" id="GO:0030248">
    <property type="term" value="F:cellulose binding"/>
    <property type="evidence" value="ECO:0007669"/>
    <property type="project" value="InterPro"/>
</dbReference>
<dbReference type="GO" id="GO:0031176">
    <property type="term" value="F:endo-1,4-beta-xylanase activity"/>
    <property type="evidence" value="ECO:0007669"/>
    <property type="project" value="UniProtKB-EC"/>
</dbReference>
<dbReference type="GO" id="GO:0045493">
    <property type="term" value="P:xylan catabolic process"/>
    <property type="evidence" value="ECO:0007669"/>
    <property type="project" value="UniProtKB-UniPathway"/>
</dbReference>
<dbReference type="Gene3D" id="3.20.20.80">
    <property type="entry name" value="Glycosidases"/>
    <property type="match status" value="1"/>
</dbReference>
<dbReference type="InterPro" id="IPR035971">
    <property type="entry name" value="CBD_sf"/>
</dbReference>
<dbReference type="InterPro" id="IPR000254">
    <property type="entry name" value="Cellulose-bd_dom_fun"/>
</dbReference>
<dbReference type="InterPro" id="IPR044846">
    <property type="entry name" value="GH10"/>
</dbReference>
<dbReference type="InterPro" id="IPR031158">
    <property type="entry name" value="GH10_AS"/>
</dbReference>
<dbReference type="InterPro" id="IPR001000">
    <property type="entry name" value="GH10_dom"/>
</dbReference>
<dbReference type="InterPro" id="IPR017853">
    <property type="entry name" value="Glycoside_hydrolase_SF"/>
</dbReference>
<dbReference type="PANTHER" id="PTHR31490:SF88">
    <property type="entry name" value="BETA-XYLANASE"/>
    <property type="match status" value="1"/>
</dbReference>
<dbReference type="PANTHER" id="PTHR31490">
    <property type="entry name" value="GLYCOSYL HYDROLASE"/>
    <property type="match status" value="1"/>
</dbReference>
<dbReference type="Pfam" id="PF00734">
    <property type="entry name" value="CBM_1"/>
    <property type="match status" value="1"/>
</dbReference>
<dbReference type="Pfam" id="PF00331">
    <property type="entry name" value="Glyco_hydro_10"/>
    <property type="match status" value="1"/>
</dbReference>
<dbReference type="PRINTS" id="PR00134">
    <property type="entry name" value="GLHYDRLASE10"/>
</dbReference>
<dbReference type="SMART" id="SM00236">
    <property type="entry name" value="fCBD"/>
    <property type="match status" value="1"/>
</dbReference>
<dbReference type="SMART" id="SM00633">
    <property type="entry name" value="Glyco_10"/>
    <property type="match status" value="1"/>
</dbReference>
<dbReference type="SUPFAM" id="SSF51445">
    <property type="entry name" value="(Trans)glycosidases"/>
    <property type="match status" value="1"/>
</dbReference>
<dbReference type="SUPFAM" id="SSF57180">
    <property type="entry name" value="Cellulose-binding domain"/>
    <property type="match status" value="1"/>
</dbReference>
<dbReference type="PROSITE" id="PS00562">
    <property type="entry name" value="CBM1_1"/>
    <property type="match status" value="1"/>
</dbReference>
<dbReference type="PROSITE" id="PS51164">
    <property type="entry name" value="CBM1_2"/>
    <property type="match status" value="1"/>
</dbReference>
<dbReference type="PROSITE" id="PS00591">
    <property type="entry name" value="GH10_1"/>
    <property type="match status" value="1"/>
</dbReference>
<dbReference type="PROSITE" id="PS51760">
    <property type="entry name" value="GH10_2"/>
    <property type="match status" value="1"/>
</dbReference>
<comment type="function">
    <text>Endo-1,4-beta-xylanase involved in the hydrolysis of xylan, a major structural heterogeneous polysaccharide found in plant biomass representing the second most abundant polysaccharide in the biosphere, after cellulose. Hydrolyzes both unsubstituted (oat spelts) and highly substituted (rye and wheat) forms of arabinoxylanslans.</text>
</comment>
<comment type="catalytic activity">
    <reaction>
        <text>Endohydrolysis of (1-&gt;4)-beta-D-xylosidic linkages in xylans.</text>
        <dbReference type="EC" id="3.2.1.8"/>
    </reaction>
</comment>
<comment type="pathway">
    <text>Glycan degradation; xylan degradation.</text>
</comment>
<comment type="subcellular location">
    <subcellularLocation>
        <location>Secreted</location>
    </subcellularLocation>
</comment>
<comment type="similarity">
    <text evidence="7">Belongs to the glycosyl hydrolase 10 (cellulase F) family.</text>
</comment>
<sequence length="860" mass="88052">MKFSSANKILFSGLVASANAYDLLKDYAGDLKIGVAANAMRFSNSNYVNAMKAFNMMVAENDCKLSGIQQQKGVYNFNGCDNHYNKAKELGMEFRGHCLIWHSYQPSWFQNADANTLKNAIVDHITKTLQHYEGKIKVWDVVNEAIDDNSNGNGWNMRRSFLYNKVPNFVDLAFQTARKVSPNTKLFYNDYNAEGVYAKAESIYNFVSDLKKRNIPIDGVGLQYHVGAKEQPSYNKINDLIGRYCKLGLEVHITELDVKLQGDQNGQSQAFSNALKACLANSCCKAFLVWGVGDNDSWLGANEQALLFNGSYQPKPVYNTLLNILKTSARPASSSAKTLPGNSKSKTLPGVNSKTLPGNKSKTLPGASKTLPGNKSKTLPGGNSNTLPGNKSKTLPGGNSKTLPGNKSRTLPGGNSKTLPGGKSRTLPGGNSKTLPGGKSKTLPGGNSKTLPGGKSKTLPGGNSKTLPGGSSKTLPGGKSKTLPGGNSKTLPGGSSKTLPGGKSKTLPGGSSKTLPGGKSKTLPGGNSKTLPGGNSKTLPGGSSKTLPGGKSKTLPGGNSKTLPGGSSKTLPGGKSKTLPGGNSKTLPGGNSKTLPGGKSKTLPGGNSKTLPGGSSKTLPGGKSKTLPGGSSKTLPGGKSKTLPGGNSKTLPGGNSKTLPGGSSKTLPGGKSKTLPGGSSKTLPGGKSKTLPGGNSKTLPGGKSKTLPGGNSKTLPGGKSKTLPGGNSKTLPGGKSKTLPGGNSKTLPGGSSKTLPGGKSKTLPGGNSKTLPGGKSKTLPGGNTKTLPGGACKPTTVTVTQKVTVTVTVESQPTQGGMNQGGGNCAAKWGQCGGNGFNGPTCCQNGSRCQFVNEWYSQCL</sequence>
<reference key="1">
    <citation type="journal article" date="1994" name="Biochem. J.">
        <title>Xylanase B from Neocallimastix patriciarum contains a non-catalytic 455-residue linker sequence comprised of 57 repeats of an octapeptide.</title>
        <authorList>
            <person name="Black G.W."/>
            <person name="Hazlewood G.P."/>
            <person name="Xue G.P."/>
            <person name="Orpin C.G."/>
            <person name="Gilbert H.J."/>
        </authorList>
    </citation>
    <scope>NUCLEOTIDE SEQUENCE [MRNA]</scope>
</reference>